<comment type="function">
    <text evidence="1">Catalyzes the conversion of 1-hydroxy-2-methyl-2-(E)-butenyl 4-diphosphate (HMBPP) into a mixture of isopentenyl diphosphate (IPP) and dimethylallyl diphosphate (DMAPP). Acts in the terminal step of the DOXP/MEP pathway for isoprenoid precursor biosynthesis.</text>
</comment>
<comment type="catalytic activity">
    <reaction evidence="1">
        <text>isopentenyl diphosphate + 2 oxidized [2Fe-2S]-[ferredoxin] + H2O = (2E)-4-hydroxy-3-methylbut-2-enyl diphosphate + 2 reduced [2Fe-2S]-[ferredoxin] + 2 H(+)</text>
        <dbReference type="Rhea" id="RHEA:24488"/>
        <dbReference type="Rhea" id="RHEA-COMP:10000"/>
        <dbReference type="Rhea" id="RHEA-COMP:10001"/>
        <dbReference type="ChEBI" id="CHEBI:15377"/>
        <dbReference type="ChEBI" id="CHEBI:15378"/>
        <dbReference type="ChEBI" id="CHEBI:33737"/>
        <dbReference type="ChEBI" id="CHEBI:33738"/>
        <dbReference type="ChEBI" id="CHEBI:128753"/>
        <dbReference type="ChEBI" id="CHEBI:128769"/>
        <dbReference type="EC" id="1.17.7.4"/>
    </reaction>
</comment>
<comment type="catalytic activity">
    <reaction evidence="1">
        <text>dimethylallyl diphosphate + 2 oxidized [2Fe-2S]-[ferredoxin] + H2O = (2E)-4-hydroxy-3-methylbut-2-enyl diphosphate + 2 reduced [2Fe-2S]-[ferredoxin] + 2 H(+)</text>
        <dbReference type="Rhea" id="RHEA:24825"/>
        <dbReference type="Rhea" id="RHEA-COMP:10000"/>
        <dbReference type="Rhea" id="RHEA-COMP:10001"/>
        <dbReference type="ChEBI" id="CHEBI:15377"/>
        <dbReference type="ChEBI" id="CHEBI:15378"/>
        <dbReference type="ChEBI" id="CHEBI:33737"/>
        <dbReference type="ChEBI" id="CHEBI:33738"/>
        <dbReference type="ChEBI" id="CHEBI:57623"/>
        <dbReference type="ChEBI" id="CHEBI:128753"/>
        <dbReference type="EC" id="1.17.7.4"/>
    </reaction>
</comment>
<comment type="cofactor">
    <cofactor evidence="1">
        <name>[4Fe-4S] cluster</name>
        <dbReference type="ChEBI" id="CHEBI:49883"/>
    </cofactor>
    <text evidence="1">Binds 1 [4Fe-4S] cluster per subunit.</text>
</comment>
<comment type="pathway">
    <text evidence="1">Isoprenoid biosynthesis; dimethylallyl diphosphate biosynthesis; dimethylallyl diphosphate from (2E)-4-hydroxy-3-methylbutenyl diphosphate: step 1/1.</text>
</comment>
<comment type="pathway">
    <text evidence="1">Isoprenoid biosynthesis; isopentenyl diphosphate biosynthesis via DXP pathway; isopentenyl diphosphate from 1-deoxy-D-xylulose 5-phosphate: step 6/6.</text>
</comment>
<comment type="subunit">
    <text evidence="1">Homodimer.</text>
</comment>
<comment type="similarity">
    <text evidence="1">Belongs to the IspH family.</text>
</comment>
<sequence>MNIILTNPRGFCAGVKRAILIVENALKVYKKTIYIRHELVHNQYVINTLRQKGVVFVEKIEQIPDYSVVIFSAHGVSKKVVQEAVKKKLIILDATCPLVEKVHIEVSKSSEKAIETILIGHRGHPEVEGTIGQYNNKNGKIYLVESIEDVHNLSVQNSKKLNFFTQTTLSITNTKKIIAALKNKFPEISGPNKEDICYATTNRQIAVRQLSKIADIIFVIGSNNSSNSNRLAELGKETGTFTKLISSFLDIKKKWLKNVNYIGITAGASAPEILVTEVIQYLRKIGAHKPIEMIGVREKKIFKIPKKLLNIKTILDENG</sequence>
<feature type="chain" id="PRO_1000124278" description="4-hydroxy-3-methylbut-2-enyl diphosphate reductase">
    <location>
        <begin position="1"/>
        <end position="319"/>
    </location>
</feature>
<feature type="active site" description="Proton donor" evidence="1">
    <location>
        <position position="126"/>
    </location>
</feature>
<feature type="binding site" evidence="1">
    <location>
        <position position="12"/>
    </location>
    <ligand>
        <name>[4Fe-4S] cluster</name>
        <dbReference type="ChEBI" id="CHEBI:49883"/>
    </ligand>
</feature>
<feature type="binding site" evidence="1">
    <location>
        <position position="41"/>
    </location>
    <ligand>
        <name>(2E)-4-hydroxy-3-methylbut-2-enyl diphosphate</name>
        <dbReference type="ChEBI" id="CHEBI:128753"/>
    </ligand>
</feature>
<feature type="binding site" evidence="1">
    <location>
        <position position="41"/>
    </location>
    <ligand>
        <name>dimethylallyl diphosphate</name>
        <dbReference type="ChEBI" id="CHEBI:57623"/>
    </ligand>
</feature>
<feature type="binding site" evidence="1">
    <location>
        <position position="41"/>
    </location>
    <ligand>
        <name>isopentenyl diphosphate</name>
        <dbReference type="ChEBI" id="CHEBI:128769"/>
    </ligand>
</feature>
<feature type="binding site" evidence="1">
    <location>
        <position position="74"/>
    </location>
    <ligand>
        <name>(2E)-4-hydroxy-3-methylbut-2-enyl diphosphate</name>
        <dbReference type="ChEBI" id="CHEBI:128753"/>
    </ligand>
</feature>
<feature type="binding site" evidence="1">
    <location>
        <position position="74"/>
    </location>
    <ligand>
        <name>dimethylallyl diphosphate</name>
        <dbReference type="ChEBI" id="CHEBI:57623"/>
    </ligand>
</feature>
<feature type="binding site" evidence="1">
    <location>
        <position position="74"/>
    </location>
    <ligand>
        <name>isopentenyl diphosphate</name>
        <dbReference type="ChEBI" id="CHEBI:128769"/>
    </ligand>
</feature>
<feature type="binding site" evidence="1">
    <location>
        <position position="96"/>
    </location>
    <ligand>
        <name>[4Fe-4S] cluster</name>
        <dbReference type="ChEBI" id="CHEBI:49883"/>
    </ligand>
</feature>
<feature type="binding site" evidence="1">
    <location>
        <position position="124"/>
    </location>
    <ligand>
        <name>(2E)-4-hydroxy-3-methylbut-2-enyl diphosphate</name>
        <dbReference type="ChEBI" id="CHEBI:128753"/>
    </ligand>
</feature>
<feature type="binding site" evidence="1">
    <location>
        <position position="124"/>
    </location>
    <ligand>
        <name>dimethylallyl diphosphate</name>
        <dbReference type="ChEBI" id="CHEBI:57623"/>
    </ligand>
</feature>
<feature type="binding site" evidence="1">
    <location>
        <position position="124"/>
    </location>
    <ligand>
        <name>isopentenyl diphosphate</name>
        <dbReference type="ChEBI" id="CHEBI:128769"/>
    </ligand>
</feature>
<feature type="binding site" evidence="1">
    <location>
        <position position="167"/>
    </location>
    <ligand>
        <name>(2E)-4-hydroxy-3-methylbut-2-enyl diphosphate</name>
        <dbReference type="ChEBI" id="CHEBI:128753"/>
    </ligand>
</feature>
<feature type="binding site" evidence="1">
    <location>
        <position position="197"/>
    </location>
    <ligand>
        <name>[4Fe-4S] cluster</name>
        <dbReference type="ChEBI" id="CHEBI:49883"/>
    </ligand>
</feature>
<feature type="binding site" evidence="1">
    <location>
        <position position="225"/>
    </location>
    <ligand>
        <name>(2E)-4-hydroxy-3-methylbut-2-enyl diphosphate</name>
        <dbReference type="ChEBI" id="CHEBI:128753"/>
    </ligand>
</feature>
<feature type="binding site" evidence="1">
    <location>
        <position position="225"/>
    </location>
    <ligand>
        <name>dimethylallyl diphosphate</name>
        <dbReference type="ChEBI" id="CHEBI:57623"/>
    </ligand>
</feature>
<feature type="binding site" evidence="1">
    <location>
        <position position="225"/>
    </location>
    <ligand>
        <name>isopentenyl diphosphate</name>
        <dbReference type="ChEBI" id="CHEBI:128769"/>
    </ligand>
</feature>
<feature type="binding site" evidence="1">
    <location>
        <position position="226"/>
    </location>
    <ligand>
        <name>(2E)-4-hydroxy-3-methylbut-2-enyl diphosphate</name>
        <dbReference type="ChEBI" id="CHEBI:128753"/>
    </ligand>
</feature>
<feature type="binding site" evidence="1">
    <location>
        <position position="226"/>
    </location>
    <ligand>
        <name>dimethylallyl diphosphate</name>
        <dbReference type="ChEBI" id="CHEBI:57623"/>
    </ligand>
</feature>
<feature type="binding site" evidence="1">
    <location>
        <position position="226"/>
    </location>
    <ligand>
        <name>isopentenyl diphosphate</name>
        <dbReference type="ChEBI" id="CHEBI:128769"/>
    </ligand>
</feature>
<feature type="binding site" evidence="1">
    <location>
        <position position="227"/>
    </location>
    <ligand>
        <name>(2E)-4-hydroxy-3-methylbut-2-enyl diphosphate</name>
        <dbReference type="ChEBI" id="CHEBI:128753"/>
    </ligand>
</feature>
<feature type="binding site" evidence="1">
    <location>
        <position position="227"/>
    </location>
    <ligand>
        <name>dimethylallyl diphosphate</name>
        <dbReference type="ChEBI" id="CHEBI:57623"/>
    </ligand>
</feature>
<feature type="binding site" evidence="1">
    <location>
        <position position="227"/>
    </location>
    <ligand>
        <name>isopentenyl diphosphate</name>
        <dbReference type="ChEBI" id="CHEBI:128769"/>
    </ligand>
</feature>
<feature type="binding site" evidence="1">
    <location>
        <position position="269"/>
    </location>
    <ligand>
        <name>(2E)-4-hydroxy-3-methylbut-2-enyl diphosphate</name>
        <dbReference type="ChEBI" id="CHEBI:128753"/>
    </ligand>
</feature>
<feature type="binding site" evidence="1">
    <location>
        <position position="269"/>
    </location>
    <ligand>
        <name>dimethylallyl diphosphate</name>
        <dbReference type="ChEBI" id="CHEBI:57623"/>
    </ligand>
</feature>
<feature type="binding site" evidence="1">
    <location>
        <position position="269"/>
    </location>
    <ligand>
        <name>isopentenyl diphosphate</name>
        <dbReference type="ChEBI" id="CHEBI:128769"/>
    </ligand>
</feature>
<dbReference type="EC" id="1.17.7.4" evidence="1"/>
<dbReference type="EMBL" id="CP001161">
    <property type="protein sequence ID" value="ACL30520.1"/>
    <property type="molecule type" value="Genomic_DNA"/>
</dbReference>
<dbReference type="RefSeq" id="WP_009874103.1">
    <property type="nucleotide sequence ID" value="NC_011833.1"/>
</dbReference>
<dbReference type="SMR" id="B8D8U8"/>
<dbReference type="KEGG" id="bap:BUAP5A_145"/>
<dbReference type="HOGENOM" id="CLU_027486_1_1_6"/>
<dbReference type="OrthoDB" id="9804068at2"/>
<dbReference type="UniPathway" id="UPA00056">
    <property type="reaction ID" value="UER00097"/>
</dbReference>
<dbReference type="UniPathway" id="UPA00059">
    <property type="reaction ID" value="UER00105"/>
</dbReference>
<dbReference type="Proteomes" id="UP000006904">
    <property type="component" value="Chromosome"/>
</dbReference>
<dbReference type="GO" id="GO:0051539">
    <property type="term" value="F:4 iron, 4 sulfur cluster binding"/>
    <property type="evidence" value="ECO:0007669"/>
    <property type="project" value="UniProtKB-UniRule"/>
</dbReference>
<dbReference type="GO" id="GO:0051745">
    <property type="term" value="F:4-hydroxy-3-methylbut-2-enyl diphosphate reductase activity"/>
    <property type="evidence" value="ECO:0007669"/>
    <property type="project" value="UniProtKB-UniRule"/>
</dbReference>
<dbReference type="GO" id="GO:0046872">
    <property type="term" value="F:metal ion binding"/>
    <property type="evidence" value="ECO:0007669"/>
    <property type="project" value="UniProtKB-KW"/>
</dbReference>
<dbReference type="GO" id="GO:0050992">
    <property type="term" value="P:dimethylallyl diphosphate biosynthetic process"/>
    <property type="evidence" value="ECO:0007669"/>
    <property type="project" value="UniProtKB-UniRule"/>
</dbReference>
<dbReference type="GO" id="GO:0019288">
    <property type="term" value="P:isopentenyl diphosphate biosynthetic process, methylerythritol 4-phosphate pathway"/>
    <property type="evidence" value="ECO:0007669"/>
    <property type="project" value="UniProtKB-UniRule"/>
</dbReference>
<dbReference type="GO" id="GO:0016114">
    <property type="term" value="P:terpenoid biosynthetic process"/>
    <property type="evidence" value="ECO:0007669"/>
    <property type="project" value="UniProtKB-UniRule"/>
</dbReference>
<dbReference type="CDD" id="cd13944">
    <property type="entry name" value="lytB_ispH"/>
    <property type="match status" value="1"/>
</dbReference>
<dbReference type="Gene3D" id="3.40.50.11270">
    <property type="match status" value="1"/>
</dbReference>
<dbReference type="Gene3D" id="3.40.1010.20">
    <property type="entry name" value="4-hydroxy-3-methylbut-2-enyl diphosphate reductase, catalytic domain"/>
    <property type="match status" value="2"/>
</dbReference>
<dbReference type="HAMAP" id="MF_00191">
    <property type="entry name" value="IspH"/>
    <property type="match status" value="1"/>
</dbReference>
<dbReference type="InterPro" id="IPR003451">
    <property type="entry name" value="LytB/IspH"/>
</dbReference>
<dbReference type="NCBIfam" id="TIGR00216">
    <property type="entry name" value="ispH_lytB"/>
    <property type="match status" value="1"/>
</dbReference>
<dbReference type="NCBIfam" id="NF002188">
    <property type="entry name" value="PRK01045.1-2"/>
    <property type="match status" value="1"/>
</dbReference>
<dbReference type="NCBIfam" id="NF002190">
    <property type="entry name" value="PRK01045.1-4"/>
    <property type="match status" value="1"/>
</dbReference>
<dbReference type="PANTHER" id="PTHR30426">
    <property type="entry name" value="4-HYDROXY-3-METHYLBUT-2-ENYL DIPHOSPHATE REDUCTASE"/>
    <property type="match status" value="1"/>
</dbReference>
<dbReference type="PANTHER" id="PTHR30426:SF0">
    <property type="entry name" value="4-HYDROXY-3-METHYLBUT-2-ENYL DIPHOSPHATE REDUCTASE"/>
    <property type="match status" value="1"/>
</dbReference>
<dbReference type="Pfam" id="PF02401">
    <property type="entry name" value="LYTB"/>
    <property type="match status" value="1"/>
</dbReference>
<reference key="1">
    <citation type="journal article" date="2009" name="Science">
        <title>The dynamics and time scale of ongoing genomic erosion in symbiotic bacteria.</title>
        <authorList>
            <person name="Moran N.A."/>
            <person name="McLaughlin H.J."/>
            <person name="Sorek R."/>
        </authorList>
    </citation>
    <scope>NUCLEOTIDE SEQUENCE [LARGE SCALE GENOMIC DNA]</scope>
    <source>
        <strain>5A</strain>
    </source>
</reference>
<evidence type="ECO:0000255" key="1">
    <source>
        <dbReference type="HAMAP-Rule" id="MF_00191"/>
    </source>
</evidence>
<organism>
    <name type="scientific">Buchnera aphidicola subsp. Acyrthosiphon pisum (strain 5A)</name>
    <dbReference type="NCBI Taxonomy" id="563178"/>
    <lineage>
        <taxon>Bacteria</taxon>
        <taxon>Pseudomonadati</taxon>
        <taxon>Pseudomonadota</taxon>
        <taxon>Gammaproteobacteria</taxon>
        <taxon>Enterobacterales</taxon>
        <taxon>Erwiniaceae</taxon>
        <taxon>Buchnera</taxon>
    </lineage>
</organism>
<name>ISPH_BUCA5</name>
<gene>
    <name evidence="1" type="primary">ispH</name>
    <name type="ordered locus">BUAP5A_145</name>
</gene>
<keyword id="KW-0004">4Fe-4S</keyword>
<keyword id="KW-0408">Iron</keyword>
<keyword id="KW-0411">Iron-sulfur</keyword>
<keyword id="KW-0414">Isoprene biosynthesis</keyword>
<keyword id="KW-0479">Metal-binding</keyword>
<keyword id="KW-0560">Oxidoreductase</keyword>
<protein>
    <recommendedName>
        <fullName evidence="1">4-hydroxy-3-methylbut-2-enyl diphosphate reductase</fullName>
        <shortName evidence="1">HMBPP reductase</shortName>
        <ecNumber evidence="1">1.17.7.4</ecNumber>
    </recommendedName>
</protein>
<accession>B8D8U8</accession>
<proteinExistence type="inferred from homology"/>